<sequence>MSDMCDVVSFVGAAERVLRARFRPSPESGPPVHARRCGWSLGISAETLRRWAGQAEVDSGVVAGVSASRSGSVKTSELEQTIEILKVATSFFARKCDPRHR</sequence>
<keyword id="KW-1185">Reference proteome</keyword>
<dbReference type="EMBL" id="AL123456">
    <property type="protein sequence ID" value="CCP44860.1"/>
    <property type="molecule type" value="Genomic_DNA"/>
</dbReference>
<dbReference type="PIR" id="H70766">
    <property type="entry name" value="H70766"/>
</dbReference>
<dbReference type="RefSeq" id="NP_216601.1">
    <property type="nucleotide sequence ID" value="NC_000962.3"/>
</dbReference>
<dbReference type="RefSeq" id="WP_003410726.1">
    <property type="nucleotide sequence ID" value="NC_000962.3"/>
</dbReference>
<dbReference type="STRING" id="83332.Rv2085"/>
<dbReference type="PaxDb" id="83332-Rv2085"/>
<dbReference type="GeneID" id="888138"/>
<dbReference type="KEGG" id="mtu:Rv2085"/>
<dbReference type="KEGG" id="mtv:RVBD_2085"/>
<dbReference type="TubercuList" id="Rv2085"/>
<dbReference type="eggNOG" id="COG2963">
    <property type="taxonomic scope" value="Bacteria"/>
</dbReference>
<dbReference type="InParanoid" id="P9WLJ9"/>
<dbReference type="OrthoDB" id="4426778at2"/>
<dbReference type="Proteomes" id="UP000001584">
    <property type="component" value="Chromosome"/>
</dbReference>
<dbReference type="Gene3D" id="1.10.10.10">
    <property type="entry name" value="Winged helix-like DNA-binding domain superfamily/Winged helix DNA-binding domain"/>
    <property type="match status" value="1"/>
</dbReference>
<dbReference type="InterPro" id="IPR036388">
    <property type="entry name" value="WH-like_DNA-bd_sf"/>
</dbReference>
<feature type="chain" id="PRO_0000103956" description="Uncharacterized protein Rv2085">
    <location>
        <begin position="1"/>
        <end position="101"/>
    </location>
</feature>
<name>Y2085_MYCTU</name>
<protein>
    <recommendedName>
        <fullName>Uncharacterized protein Rv2085</fullName>
    </recommendedName>
</protein>
<gene>
    <name type="ordered locus">Rv2085</name>
    <name type="ORF">MTCY49.24</name>
</gene>
<reference key="1">
    <citation type="journal article" date="1998" name="Nature">
        <title>Deciphering the biology of Mycobacterium tuberculosis from the complete genome sequence.</title>
        <authorList>
            <person name="Cole S.T."/>
            <person name="Brosch R."/>
            <person name="Parkhill J."/>
            <person name="Garnier T."/>
            <person name="Churcher C.M."/>
            <person name="Harris D.E."/>
            <person name="Gordon S.V."/>
            <person name="Eiglmeier K."/>
            <person name="Gas S."/>
            <person name="Barry C.E. III"/>
            <person name="Tekaia F."/>
            <person name="Badcock K."/>
            <person name="Basham D."/>
            <person name="Brown D."/>
            <person name="Chillingworth T."/>
            <person name="Connor R."/>
            <person name="Davies R.M."/>
            <person name="Devlin K."/>
            <person name="Feltwell T."/>
            <person name="Gentles S."/>
            <person name="Hamlin N."/>
            <person name="Holroyd S."/>
            <person name="Hornsby T."/>
            <person name="Jagels K."/>
            <person name="Krogh A."/>
            <person name="McLean J."/>
            <person name="Moule S."/>
            <person name="Murphy L.D."/>
            <person name="Oliver S."/>
            <person name="Osborne J."/>
            <person name="Quail M.A."/>
            <person name="Rajandream M.A."/>
            <person name="Rogers J."/>
            <person name="Rutter S."/>
            <person name="Seeger K."/>
            <person name="Skelton S."/>
            <person name="Squares S."/>
            <person name="Squares R."/>
            <person name="Sulston J.E."/>
            <person name="Taylor K."/>
            <person name="Whitehead S."/>
            <person name="Barrell B.G."/>
        </authorList>
    </citation>
    <scope>NUCLEOTIDE SEQUENCE [LARGE SCALE GENOMIC DNA]</scope>
    <source>
        <strain>ATCC 25618 / H37Rv</strain>
    </source>
</reference>
<accession>P9WLJ9</accession>
<accession>L0TBB8</accession>
<accession>P64935</accession>
<accession>Q10693</accession>
<proteinExistence type="predicted"/>
<organism>
    <name type="scientific">Mycobacterium tuberculosis (strain ATCC 25618 / H37Rv)</name>
    <dbReference type="NCBI Taxonomy" id="83332"/>
    <lineage>
        <taxon>Bacteria</taxon>
        <taxon>Bacillati</taxon>
        <taxon>Actinomycetota</taxon>
        <taxon>Actinomycetes</taxon>
        <taxon>Mycobacteriales</taxon>
        <taxon>Mycobacteriaceae</taxon>
        <taxon>Mycobacterium</taxon>
        <taxon>Mycobacterium tuberculosis complex</taxon>
    </lineage>
</organism>